<keyword id="KW-0030">Aminoacyl-tRNA synthetase</keyword>
<keyword id="KW-0067">ATP-binding</keyword>
<keyword id="KW-0963">Cytoplasm</keyword>
<keyword id="KW-0436">Ligase</keyword>
<keyword id="KW-0547">Nucleotide-binding</keyword>
<keyword id="KW-0648">Protein biosynthesis</keyword>
<keyword id="KW-1185">Reference proteome</keyword>
<organism>
    <name type="scientific">Streptococcus mutans serotype c (strain ATCC 700610 / UA159)</name>
    <dbReference type="NCBI Taxonomy" id="210007"/>
    <lineage>
        <taxon>Bacteria</taxon>
        <taxon>Bacillati</taxon>
        <taxon>Bacillota</taxon>
        <taxon>Bacilli</taxon>
        <taxon>Lactobacillales</taxon>
        <taxon>Streptococcaceae</taxon>
        <taxon>Streptococcus</taxon>
    </lineage>
</organism>
<name>SYH_STRMU</name>
<sequence>MTLQKPKGTQDILPQETVKWQYVENVARKTFKKYHYGEIRTPMFERYEVISRSVGDTTDIVTKEMYDFHDKGDRHITLRPEGTAPVVRSYVENKLFAPEVQKPVKVFYIGSMFRYERPQAGRLREFHQLGVECFGSNNPAIDAETIAMAYQLFNELGIKDVTLHLNSLGNKESRKAYRQALIDYLIPMKDKLSKDSQRRLEENPLRVLDSKEKEDKEAVENAPSILDYLDDDSQAHFQGVRDMLEVLDIPYVIDTNMVRGLDYYNHTIFEFITQVDKSELTLCAGGRYDSLVEYFGGPATAGFGFGLGLERLLLVIDKQKINLPVDNSLDVYIAVLGAAANSTALELIQAIRKQGFSAERDYLSRKIKAQFKSADVFKTKLIMTLGESEVETGQVAVKNNFTRQEIAVSFEEIKTDFASVFKQLGSDRP</sequence>
<dbReference type="EC" id="6.1.1.21" evidence="1"/>
<dbReference type="EMBL" id="AE014133">
    <property type="protein sequence ID" value="AAN59696.1"/>
    <property type="molecule type" value="Genomic_DNA"/>
</dbReference>
<dbReference type="RefSeq" id="NP_722390.1">
    <property type="nucleotide sequence ID" value="NC_004350.2"/>
</dbReference>
<dbReference type="RefSeq" id="WP_002352373.1">
    <property type="nucleotide sequence ID" value="NC_004350.2"/>
</dbReference>
<dbReference type="SMR" id="Q8CWW2"/>
<dbReference type="STRING" id="210007.SMU_2102"/>
<dbReference type="KEGG" id="smu:SMU_2102"/>
<dbReference type="PATRIC" id="fig|210007.7.peg.1872"/>
<dbReference type="eggNOG" id="COG0124">
    <property type="taxonomic scope" value="Bacteria"/>
</dbReference>
<dbReference type="HOGENOM" id="CLU_025113_1_1_9"/>
<dbReference type="OrthoDB" id="9800814at2"/>
<dbReference type="PhylomeDB" id="Q8CWW2"/>
<dbReference type="Proteomes" id="UP000002512">
    <property type="component" value="Chromosome"/>
</dbReference>
<dbReference type="GO" id="GO:0005737">
    <property type="term" value="C:cytoplasm"/>
    <property type="evidence" value="ECO:0007669"/>
    <property type="project" value="UniProtKB-SubCell"/>
</dbReference>
<dbReference type="GO" id="GO:0005524">
    <property type="term" value="F:ATP binding"/>
    <property type="evidence" value="ECO:0007669"/>
    <property type="project" value="UniProtKB-UniRule"/>
</dbReference>
<dbReference type="GO" id="GO:0140096">
    <property type="term" value="F:catalytic activity, acting on a protein"/>
    <property type="evidence" value="ECO:0007669"/>
    <property type="project" value="UniProtKB-ARBA"/>
</dbReference>
<dbReference type="GO" id="GO:0004821">
    <property type="term" value="F:histidine-tRNA ligase activity"/>
    <property type="evidence" value="ECO:0007669"/>
    <property type="project" value="UniProtKB-UniRule"/>
</dbReference>
<dbReference type="GO" id="GO:0016740">
    <property type="term" value="F:transferase activity"/>
    <property type="evidence" value="ECO:0007669"/>
    <property type="project" value="UniProtKB-ARBA"/>
</dbReference>
<dbReference type="GO" id="GO:0006427">
    <property type="term" value="P:histidyl-tRNA aminoacylation"/>
    <property type="evidence" value="ECO:0007669"/>
    <property type="project" value="UniProtKB-UniRule"/>
</dbReference>
<dbReference type="CDD" id="cd00773">
    <property type="entry name" value="HisRS-like_core"/>
    <property type="match status" value="1"/>
</dbReference>
<dbReference type="CDD" id="cd00859">
    <property type="entry name" value="HisRS_anticodon"/>
    <property type="match status" value="1"/>
</dbReference>
<dbReference type="FunFam" id="3.30.930.10:FF:000005">
    <property type="entry name" value="Histidine--tRNA ligase"/>
    <property type="match status" value="1"/>
</dbReference>
<dbReference type="Gene3D" id="3.40.50.800">
    <property type="entry name" value="Anticodon-binding domain"/>
    <property type="match status" value="1"/>
</dbReference>
<dbReference type="Gene3D" id="3.30.930.10">
    <property type="entry name" value="Bira Bifunctional Protein, Domain 2"/>
    <property type="match status" value="1"/>
</dbReference>
<dbReference type="HAMAP" id="MF_00127">
    <property type="entry name" value="His_tRNA_synth"/>
    <property type="match status" value="1"/>
</dbReference>
<dbReference type="InterPro" id="IPR006195">
    <property type="entry name" value="aa-tRNA-synth_II"/>
</dbReference>
<dbReference type="InterPro" id="IPR045864">
    <property type="entry name" value="aa-tRNA-synth_II/BPL/LPL"/>
</dbReference>
<dbReference type="InterPro" id="IPR004154">
    <property type="entry name" value="Anticodon-bd"/>
</dbReference>
<dbReference type="InterPro" id="IPR036621">
    <property type="entry name" value="Anticodon-bd_dom_sf"/>
</dbReference>
<dbReference type="InterPro" id="IPR015807">
    <property type="entry name" value="His-tRNA-ligase"/>
</dbReference>
<dbReference type="InterPro" id="IPR041715">
    <property type="entry name" value="HisRS-like_core"/>
</dbReference>
<dbReference type="InterPro" id="IPR004516">
    <property type="entry name" value="HisRS/HisZ"/>
</dbReference>
<dbReference type="InterPro" id="IPR033656">
    <property type="entry name" value="HisRS_anticodon"/>
</dbReference>
<dbReference type="NCBIfam" id="TIGR00442">
    <property type="entry name" value="hisS"/>
    <property type="match status" value="1"/>
</dbReference>
<dbReference type="PANTHER" id="PTHR43707:SF1">
    <property type="entry name" value="HISTIDINE--TRNA LIGASE, MITOCHONDRIAL-RELATED"/>
    <property type="match status" value="1"/>
</dbReference>
<dbReference type="PANTHER" id="PTHR43707">
    <property type="entry name" value="HISTIDYL-TRNA SYNTHETASE"/>
    <property type="match status" value="1"/>
</dbReference>
<dbReference type="Pfam" id="PF03129">
    <property type="entry name" value="HGTP_anticodon"/>
    <property type="match status" value="1"/>
</dbReference>
<dbReference type="Pfam" id="PF13393">
    <property type="entry name" value="tRNA-synt_His"/>
    <property type="match status" value="1"/>
</dbReference>
<dbReference type="PIRSF" id="PIRSF001549">
    <property type="entry name" value="His-tRNA_synth"/>
    <property type="match status" value="1"/>
</dbReference>
<dbReference type="SUPFAM" id="SSF52954">
    <property type="entry name" value="Class II aaRS ABD-related"/>
    <property type="match status" value="1"/>
</dbReference>
<dbReference type="SUPFAM" id="SSF55681">
    <property type="entry name" value="Class II aaRS and biotin synthetases"/>
    <property type="match status" value="1"/>
</dbReference>
<dbReference type="PROSITE" id="PS50862">
    <property type="entry name" value="AA_TRNA_LIGASE_II"/>
    <property type="match status" value="1"/>
</dbReference>
<reference key="1">
    <citation type="journal article" date="2002" name="Proc. Natl. Acad. Sci. U.S.A.">
        <title>Genome sequence of Streptococcus mutans UA159, a cariogenic dental pathogen.</title>
        <authorList>
            <person name="Ajdic D.J."/>
            <person name="McShan W.M."/>
            <person name="McLaughlin R.E."/>
            <person name="Savic G."/>
            <person name="Chang J."/>
            <person name="Carson M.B."/>
            <person name="Primeaux C."/>
            <person name="Tian R."/>
            <person name="Kenton S."/>
            <person name="Jia H.G."/>
            <person name="Lin S.P."/>
            <person name="Qian Y."/>
            <person name="Li S."/>
            <person name="Zhu H."/>
            <person name="Najar F.Z."/>
            <person name="Lai H."/>
            <person name="White J."/>
            <person name="Roe B.A."/>
            <person name="Ferretti J.J."/>
        </authorList>
    </citation>
    <scope>NUCLEOTIDE SEQUENCE [LARGE SCALE GENOMIC DNA]</scope>
    <source>
        <strain>ATCC 700610 / UA159</strain>
    </source>
</reference>
<feature type="chain" id="PRO_0000136263" description="Histidine--tRNA ligase">
    <location>
        <begin position="1"/>
        <end position="429"/>
    </location>
</feature>
<gene>
    <name evidence="1" type="primary">hisS</name>
    <name type="ordered locus">SMU_2102</name>
</gene>
<proteinExistence type="inferred from homology"/>
<evidence type="ECO:0000255" key="1">
    <source>
        <dbReference type="HAMAP-Rule" id="MF_00127"/>
    </source>
</evidence>
<comment type="catalytic activity">
    <reaction evidence="1">
        <text>tRNA(His) + L-histidine + ATP = L-histidyl-tRNA(His) + AMP + diphosphate + H(+)</text>
        <dbReference type="Rhea" id="RHEA:17313"/>
        <dbReference type="Rhea" id="RHEA-COMP:9665"/>
        <dbReference type="Rhea" id="RHEA-COMP:9689"/>
        <dbReference type="ChEBI" id="CHEBI:15378"/>
        <dbReference type="ChEBI" id="CHEBI:30616"/>
        <dbReference type="ChEBI" id="CHEBI:33019"/>
        <dbReference type="ChEBI" id="CHEBI:57595"/>
        <dbReference type="ChEBI" id="CHEBI:78442"/>
        <dbReference type="ChEBI" id="CHEBI:78527"/>
        <dbReference type="ChEBI" id="CHEBI:456215"/>
        <dbReference type="EC" id="6.1.1.21"/>
    </reaction>
</comment>
<comment type="subunit">
    <text evidence="1">Homodimer.</text>
</comment>
<comment type="subcellular location">
    <subcellularLocation>
        <location evidence="1">Cytoplasm</location>
    </subcellularLocation>
</comment>
<comment type="similarity">
    <text evidence="1">Belongs to the class-II aminoacyl-tRNA synthetase family.</text>
</comment>
<accession>Q8CWW2</accession>
<protein>
    <recommendedName>
        <fullName evidence="1">Histidine--tRNA ligase</fullName>
        <ecNumber evidence="1">6.1.1.21</ecNumber>
    </recommendedName>
    <alternativeName>
        <fullName evidence="1">Histidyl-tRNA synthetase</fullName>
        <shortName evidence="1">HisRS</shortName>
    </alternativeName>
</protein>